<organism>
    <name type="scientific">Oncorhynchus mykiss</name>
    <name type="common">Rainbow trout</name>
    <name type="synonym">Salmo gairdneri</name>
    <dbReference type="NCBI Taxonomy" id="8022"/>
    <lineage>
        <taxon>Eukaryota</taxon>
        <taxon>Metazoa</taxon>
        <taxon>Chordata</taxon>
        <taxon>Craniata</taxon>
        <taxon>Vertebrata</taxon>
        <taxon>Euteleostomi</taxon>
        <taxon>Actinopterygii</taxon>
        <taxon>Neopterygii</taxon>
        <taxon>Teleostei</taxon>
        <taxon>Protacanthopterygii</taxon>
        <taxon>Salmoniformes</taxon>
        <taxon>Salmonidae</taxon>
        <taxon>Salmoninae</taxon>
        <taxon>Oncorhynchus</taxon>
    </lineage>
</organism>
<accession>Q01345</accession>
<protein>
    <recommendedName>
        <fullName>Na(+)/H(+) exchanger beta</fullName>
    </recommendedName>
    <alternativeName>
        <fullName>Beta-NHE</fullName>
    </alternativeName>
    <alternativeName>
        <fullName>Na(+)/H(+) antiporter</fullName>
    </alternativeName>
</protein>
<sequence>MPAFSCAFPGCRRDLLVIVLVVFVGIGLPIEASAPAYQSHGTEGSHLTNITNTKKAFPVLAVNYEHVRKPFEIALWILLALLMKLGFHLIPRLSAVVPESCLLIVVGLLVGGLIKVIGEEPPVLDSQLFFLCLLPPIILDAGYFLPIRPFTENVGTILVFAVIGTLWNAFFMGGLLYALCQIESVGLSGVDLLACLLFGSIVSAVDPVAVLAVFEEIHINELVHILVFGESLLNDAVTVVLYNLFEEFSKVGTVTVLDVFLGVVCFFVVSLGGVLVGAIYGFLAAFTSRFTSHTRVIEPLFVFLYSYMAYLSSEMFHLSGIMALIACGVVMRPYVEANISHKSYTTIKYFLKMWSSVSETLIFIFLGVSTVAGPHAWNWTFVITTVILCLVSRVLGVIGLTFIINKFRIVKLTKKDQFIVAYGGLRGAIAFSLGYLLSNSHQMRNLFLTAIITVIFFTVFVQGMTIRPLVELLAVKKKKESKPSINEEIHTEFLDHLLTGVEGVCGHYGHYHWKEKLNRFNKTYVKRWLIAGENFKEPELIAFYRKMELKQAIMMVESGQLPSVLPSTISMQNIQPRAIPRVSKKREEEIRRILRANLQNNKQKMRSRSYSRHTLFDADEEDNVSEVRLRKTKMEMERRVSVMERRMSHYLTVPANRESPRPGVRRVRFESDNQVFSADSFPTVHFEQPSPPSTPDAVSLEEEEEEVPKRPSLKADIEGPRGNASDNHQGELDYQRLARCLSDPGPNKDKEDDDPFMSC</sequence>
<comment type="function">
    <text>Involved in pH regulation to eliminate acids generated by active metabolism or to counter adverse environmental conditions. Major proton extruding system driven by the inward sodium ion chemical gradient.</text>
</comment>
<comment type="subcellular location">
    <subcellularLocation>
        <location>Basolateral cell membrane</location>
        <topology>Multi-pass membrane protein</topology>
    </subcellularLocation>
</comment>
<comment type="PTM">
    <text>Activated by cAMP, protein kinase A and protein kinase C.</text>
</comment>
<comment type="miscellaneous">
    <text>Inhibited by amiloride and 5-amino-substituted derivatives and activated in a cooperative fashion by intracellular H(+).</text>
</comment>
<comment type="similarity">
    <text evidence="3">Belongs to the monovalent cation:proton antiporter 1 (CPA1) transporter (TC 2.A.36) family.</text>
</comment>
<feature type="chain" id="PRO_0000052369" description="Na(+)/H(+) exchanger beta">
    <location>
        <begin position="1"/>
        <end position="759"/>
    </location>
</feature>
<feature type="topological domain" description="Cytoplasmic" evidence="1">
    <location>
        <begin position="1"/>
        <end position="14"/>
    </location>
</feature>
<feature type="transmembrane region" description="Helical; Name=M1" evidence="1">
    <location>
        <begin position="15"/>
        <end position="34"/>
    </location>
</feature>
<feature type="topological domain" description="Extracellular" evidence="1">
    <location>
        <begin position="35"/>
        <end position="75"/>
    </location>
</feature>
<feature type="transmembrane region" description="Helical; Name=M2" evidence="1">
    <location>
        <begin position="76"/>
        <end position="95"/>
    </location>
</feature>
<feature type="topological domain" description="Cytoplasmic" evidence="1">
    <location>
        <begin position="96"/>
        <end position="97"/>
    </location>
</feature>
<feature type="transmembrane region" description="Helical; Name=M3" evidence="1">
    <location>
        <begin position="98"/>
        <end position="117"/>
    </location>
</feature>
<feature type="topological domain" description="Extracellular" evidence="1">
    <location>
        <begin position="118"/>
        <end position="122"/>
    </location>
</feature>
<feature type="transmembrane region" description="Helical; Name=M4" evidence="1">
    <location>
        <begin position="123"/>
        <end position="142"/>
    </location>
</feature>
<feature type="topological domain" description="Cytoplasmic" evidence="1">
    <location>
        <begin position="143"/>
        <end position="149"/>
    </location>
</feature>
<feature type="transmembrane region" description="Helical; Name=M5" evidence="1">
    <location>
        <begin position="150"/>
        <end position="169"/>
    </location>
</feature>
<feature type="topological domain" description="Extracellular" evidence="1">
    <location>
        <begin position="170"/>
        <end position="195"/>
    </location>
</feature>
<feature type="transmembrane region" description="Helical; Name=M5A" evidence="1">
    <location>
        <begin position="196"/>
        <end position="214"/>
    </location>
</feature>
<feature type="topological domain" description="Cytoplasmic" evidence="1">
    <location>
        <begin position="215"/>
        <end position="225"/>
    </location>
</feature>
<feature type="transmembrane region" description="Helical; Name=M5B" evidence="1">
    <location>
        <begin position="226"/>
        <end position="244"/>
    </location>
</feature>
<feature type="topological domain" description="Extracellular" evidence="1">
    <location>
        <begin position="245"/>
        <end position="261"/>
    </location>
</feature>
<feature type="transmembrane region" description="Helical; Name=M6" evidence="1">
    <location>
        <begin position="262"/>
        <end position="282"/>
    </location>
</feature>
<feature type="topological domain" description="Cytoplasmic" evidence="1">
    <location>
        <begin position="283"/>
        <end position="311"/>
    </location>
</feature>
<feature type="transmembrane region" description="Helical; Name=M7" evidence="1">
    <location>
        <begin position="312"/>
        <end position="330"/>
    </location>
</feature>
<feature type="topological domain" description="Extracellular" evidence="1">
    <location>
        <begin position="331"/>
        <end position="352"/>
    </location>
</feature>
<feature type="transmembrane region" description="Helical; Name=M8" evidence="1">
    <location>
        <begin position="353"/>
        <end position="372"/>
    </location>
</feature>
<feature type="topological domain" description="Cytoplasmic" evidence="1">
    <location>
        <begin position="373"/>
        <end position="376"/>
    </location>
</feature>
<feature type="transmembrane region" description="Helical; Name=M9" evidence="1">
    <location>
        <begin position="377"/>
        <end position="398"/>
    </location>
</feature>
<feature type="topological domain" description="Extracellular" evidence="1">
    <location>
        <begin position="399"/>
        <end position="446"/>
    </location>
</feature>
<feature type="transmembrane region" description="Helical; Name=M10" evidence="1">
    <location>
        <begin position="447"/>
        <end position="467"/>
    </location>
</feature>
<feature type="topological domain" description="Cytoplasmic" evidence="1">
    <location>
        <begin position="468"/>
        <end position="759"/>
    </location>
</feature>
<feature type="region of interest" description="Disordered" evidence="2">
    <location>
        <begin position="681"/>
        <end position="759"/>
    </location>
</feature>
<feature type="compositionally biased region" description="Basic and acidic residues" evidence="2">
    <location>
        <begin position="707"/>
        <end position="719"/>
    </location>
</feature>
<feature type="modified residue" description="Phosphoserine; by PKA" evidence="1">
    <location>
        <position position="641"/>
    </location>
</feature>
<feature type="modified residue" description="Phosphoserine; by PKA" evidence="1">
    <location>
        <position position="648"/>
    </location>
</feature>
<feature type="glycosylation site" description="N-linked (GlcNAc...) asparagine" evidence="1">
    <location>
        <position position="49"/>
    </location>
</feature>
<feature type="glycosylation site" description="N-linked (GlcNAc...) asparagine" evidence="1">
    <location>
        <position position="338"/>
    </location>
</feature>
<proteinExistence type="evidence at transcript level"/>
<evidence type="ECO:0000255" key="1"/>
<evidence type="ECO:0000256" key="2">
    <source>
        <dbReference type="SAM" id="MobiDB-lite"/>
    </source>
</evidence>
<evidence type="ECO:0000305" key="3"/>
<dbReference type="EMBL" id="M94581">
    <property type="protein sequence ID" value="AAA49549.1"/>
    <property type="molecule type" value="mRNA"/>
</dbReference>
<dbReference type="PIR" id="A46188">
    <property type="entry name" value="A46188"/>
</dbReference>
<dbReference type="RefSeq" id="NP_001118167.1">
    <property type="nucleotide sequence ID" value="NM_001124695.1"/>
</dbReference>
<dbReference type="SMR" id="Q01345"/>
<dbReference type="GeneID" id="100136740"/>
<dbReference type="KEGG" id="omy:100136740"/>
<dbReference type="CTD" id="795135"/>
<dbReference type="OrthoDB" id="196264at2759"/>
<dbReference type="Proteomes" id="UP000694395">
    <property type="component" value="Unplaced"/>
</dbReference>
<dbReference type="GO" id="GO:0016323">
    <property type="term" value="C:basolateral plasma membrane"/>
    <property type="evidence" value="ECO:0007669"/>
    <property type="project" value="UniProtKB-SubCell"/>
</dbReference>
<dbReference type="GO" id="GO:0015386">
    <property type="term" value="F:potassium:proton antiporter activity"/>
    <property type="evidence" value="ECO:0007669"/>
    <property type="project" value="TreeGrafter"/>
</dbReference>
<dbReference type="GO" id="GO:0015385">
    <property type="term" value="F:sodium:proton antiporter activity"/>
    <property type="evidence" value="ECO:0007669"/>
    <property type="project" value="InterPro"/>
</dbReference>
<dbReference type="GO" id="GO:0051453">
    <property type="term" value="P:regulation of intracellular pH"/>
    <property type="evidence" value="ECO:0007669"/>
    <property type="project" value="TreeGrafter"/>
</dbReference>
<dbReference type="GO" id="GO:0098719">
    <property type="term" value="P:sodium ion import across plasma membrane"/>
    <property type="evidence" value="ECO:0007669"/>
    <property type="project" value="TreeGrafter"/>
</dbReference>
<dbReference type="Gene3D" id="6.10.140.1330">
    <property type="match status" value="1"/>
</dbReference>
<dbReference type="Gene3D" id="6.10.250.1040">
    <property type="match status" value="1"/>
</dbReference>
<dbReference type="Gene3D" id="6.10.250.2020">
    <property type="match status" value="1"/>
</dbReference>
<dbReference type="InterPro" id="IPR018422">
    <property type="entry name" value="Cation/H_exchanger_CPA1"/>
</dbReference>
<dbReference type="InterPro" id="IPR006153">
    <property type="entry name" value="Cation/H_exchanger_TM"/>
</dbReference>
<dbReference type="InterPro" id="IPR004709">
    <property type="entry name" value="NaH_exchanger"/>
</dbReference>
<dbReference type="InterPro" id="IPR001970">
    <property type="entry name" value="NHE-1-like"/>
</dbReference>
<dbReference type="InterPro" id="IPR032103">
    <property type="entry name" value="NHE_CaM-bd"/>
</dbReference>
<dbReference type="NCBIfam" id="TIGR00840">
    <property type="entry name" value="b_cpa1"/>
    <property type="match status" value="1"/>
</dbReference>
<dbReference type="PANTHER" id="PTHR10110">
    <property type="entry name" value="SODIUM/HYDROGEN EXCHANGER"/>
    <property type="match status" value="1"/>
</dbReference>
<dbReference type="PANTHER" id="PTHR10110:SF192">
    <property type="entry name" value="SODIUM_HYDROGEN EXCHANGER"/>
    <property type="match status" value="1"/>
</dbReference>
<dbReference type="Pfam" id="PF00999">
    <property type="entry name" value="Na_H_Exchanger"/>
    <property type="match status" value="1"/>
</dbReference>
<dbReference type="Pfam" id="PF16644">
    <property type="entry name" value="NEXCaM_BD"/>
    <property type="match status" value="1"/>
</dbReference>
<dbReference type="PRINTS" id="PR01084">
    <property type="entry name" value="NAHEXCHNGR"/>
</dbReference>
<dbReference type="PRINTS" id="PR01085">
    <property type="entry name" value="NAHEXCHNGR1"/>
</dbReference>
<reference key="1">
    <citation type="journal article" date="1992" name="Proc. Natl. Acad. Sci. U.S.A.">
        <title>Cloning and expression of a cAMP-activated Na+/H+ exchanger: evidence that the cytoplasmic domain mediates hormonal regulation.</title>
        <authorList>
            <person name="Borgese F."/>
            <person name="Sardet C."/>
            <person name="Cappadoro M."/>
            <person name="Pouyssegur J."/>
            <person name="Motais R."/>
        </authorList>
    </citation>
    <scope>NUCLEOTIDE SEQUENCE [MRNA]</scope>
    <source>
        <tissue>Nucleated erythrocyte</tissue>
    </source>
</reference>
<keyword id="KW-0050">Antiport</keyword>
<keyword id="KW-1003">Cell membrane</keyword>
<keyword id="KW-0325">Glycoprotein</keyword>
<keyword id="KW-0406">Ion transport</keyword>
<keyword id="KW-0472">Membrane</keyword>
<keyword id="KW-0597">Phosphoprotein</keyword>
<keyword id="KW-0915">Sodium</keyword>
<keyword id="KW-0739">Sodium transport</keyword>
<keyword id="KW-0812">Transmembrane</keyword>
<keyword id="KW-1133">Transmembrane helix</keyword>
<keyword id="KW-0813">Transport</keyword>
<name>NHEB_ONCMY</name>